<organism>
    <name type="scientific">Methanocaldococcus jannaschii (strain ATCC 43067 / DSM 2661 / JAL-1 / JCM 10045 / NBRC 100440)</name>
    <name type="common">Methanococcus jannaschii</name>
    <dbReference type="NCBI Taxonomy" id="243232"/>
    <lineage>
        <taxon>Archaea</taxon>
        <taxon>Methanobacteriati</taxon>
        <taxon>Methanobacteriota</taxon>
        <taxon>Methanomada group</taxon>
        <taxon>Methanococci</taxon>
        <taxon>Methanococcales</taxon>
        <taxon>Methanocaldococcaceae</taxon>
        <taxon>Methanocaldococcus</taxon>
    </lineage>
</organism>
<proteinExistence type="inferred from homology"/>
<gene>
    <name evidence="1" type="primary">rpl14</name>
    <name type="ordered locus">MJ0466</name>
</gene>
<dbReference type="EMBL" id="L77117">
    <property type="protein sequence ID" value="AAB98455.1"/>
    <property type="molecule type" value="Genomic_DNA"/>
</dbReference>
<dbReference type="PIR" id="B64358">
    <property type="entry name" value="B64358"/>
</dbReference>
<dbReference type="RefSeq" id="WP_010869966.1">
    <property type="nucleotide sequence ID" value="NC_000909.1"/>
</dbReference>
<dbReference type="SMR" id="P54037"/>
<dbReference type="FunCoup" id="P54037">
    <property type="interactions" value="222"/>
</dbReference>
<dbReference type="STRING" id="243232.MJ_0466"/>
<dbReference type="PaxDb" id="243232-MJ_0466"/>
<dbReference type="EnsemblBacteria" id="AAB98455">
    <property type="protein sequence ID" value="AAB98455"/>
    <property type="gene ID" value="MJ_0466"/>
</dbReference>
<dbReference type="GeneID" id="65883006"/>
<dbReference type="KEGG" id="mja:MJ_0466"/>
<dbReference type="eggNOG" id="arCOG04095">
    <property type="taxonomic scope" value="Archaea"/>
</dbReference>
<dbReference type="HOGENOM" id="CLU_095071_3_0_2"/>
<dbReference type="InParanoid" id="P54037"/>
<dbReference type="OrthoDB" id="23569at2157"/>
<dbReference type="PhylomeDB" id="P54037"/>
<dbReference type="Proteomes" id="UP000000805">
    <property type="component" value="Chromosome"/>
</dbReference>
<dbReference type="GO" id="GO:0022625">
    <property type="term" value="C:cytosolic large ribosomal subunit"/>
    <property type="evidence" value="ECO:0000318"/>
    <property type="project" value="GO_Central"/>
</dbReference>
<dbReference type="GO" id="GO:0070180">
    <property type="term" value="F:large ribosomal subunit rRNA binding"/>
    <property type="evidence" value="ECO:0000318"/>
    <property type="project" value="GO_Central"/>
</dbReference>
<dbReference type="GO" id="GO:0003735">
    <property type="term" value="F:structural constituent of ribosome"/>
    <property type="evidence" value="ECO:0000318"/>
    <property type="project" value="GO_Central"/>
</dbReference>
<dbReference type="GO" id="GO:0006412">
    <property type="term" value="P:translation"/>
    <property type="evidence" value="ECO:0007669"/>
    <property type="project" value="UniProtKB-UniRule"/>
</dbReference>
<dbReference type="CDD" id="cd00337">
    <property type="entry name" value="Ribosomal_uL14"/>
    <property type="match status" value="1"/>
</dbReference>
<dbReference type="FunFam" id="2.40.150.20:FF:000007">
    <property type="entry name" value="50S ribosomal protein L14"/>
    <property type="match status" value="1"/>
</dbReference>
<dbReference type="Gene3D" id="2.40.150.20">
    <property type="entry name" value="Ribosomal protein L14"/>
    <property type="match status" value="1"/>
</dbReference>
<dbReference type="HAMAP" id="MF_01367">
    <property type="entry name" value="Ribosomal_uL14"/>
    <property type="match status" value="1"/>
</dbReference>
<dbReference type="InterPro" id="IPR000218">
    <property type="entry name" value="Ribosomal_uL14"/>
</dbReference>
<dbReference type="InterPro" id="IPR019971">
    <property type="entry name" value="Ribosomal_uL14_arc"/>
</dbReference>
<dbReference type="InterPro" id="IPR019972">
    <property type="entry name" value="Ribosomal_uL14_CS"/>
</dbReference>
<dbReference type="InterPro" id="IPR036853">
    <property type="entry name" value="Ribosomal_uL14_sf"/>
</dbReference>
<dbReference type="NCBIfam" id="NF006344">
    <property type="entry name" value="PRK08571.1"/>
    <property type="match status" value="1"/>
</dbReference>
<dbReference type="NCBIfam" id="TIGR03673">
    <property type="entry name" value="uL14_arch"/>
    <property type="match status" value="1"/>
</dbReference>
<dbReference type="PANTHER" id="PTHR11761">
    <property type="entry name" value="50S/60S RIBOSOMAL PROTEIN L14/L23"/>
    <property type="match status" value="1"/>
</dbReference>
<dbReference type="PANTHER" id="PTHR11761:SF8">
    <property type="entry name" value="LARGE RIBOSOMAL SUBUNIT PROTEIN UL14"/>
    <property type="match status" value="1"/>
</dbReference>
<dbReference type="Pfam" id="PF00238">
    <property type="entry name" value="Ribosomal_L14"/>
    <property type="match status" value="1"/>
</dbReference>
<dbReference type="SMART" id="SM01374">
    <property type="entry name" value="Ribosomal_L14"/>
    <property type="match status" value="1"/>
</dbReference>
<dbReference type="SUPFAM" id="SSF50193">
    <property type="entry name" value="Ribosomal protein L14"/>
    <property type="match status" value="1"/>
</dbReference>
<dbReference type="PROSITE" id="PS00049">
    <property type="entry name" value="RIBOSOMAL_L14"/>
    <property type="match status" value="1"/>
</dbReference>
<accession>P54037</accession>
<evidence type="ECO:0000255" key="1">
    <source>
        <dbReference type="HAMAP-Rule" id="MF_01367"/>
    </source>
</evidence>
<evidence type="ECO:0000305" key="2"/>
<keyword id="KW-1185">Reference proteome</keyword>
<keyword id="KW-0687">Ribonucleoprotein</keyword>
<keyword id="KW-0689">Ribosomal protein</keyword>
<keyword id="KW-0694">RNA-binding</keyword>
<keyword id="KW-0699">rRNA-binding</keyword>
<reference key="1">
    <citation type="journal article" date="1996" name="Science">
        <title>Complete genome sequence of the methanogenic archaeon, Methanococcus jannaschii.</title>
        <authorList>
            <person name="Bult C.J."/>
            <person name="White O."/>
            <person name="Olsen G.J."/>
            <person name="Zhou L."/>
            <person name="Fleischmann R.D."/>
            <person name="Sutton G.G."/>
            <person name="Blake J.A."/>
            <person name="FitzGerald L.M."/>
            <person name="Clayton R.A."/>
            <person name="Gocayne J.D."/>
            <person name="Kerlavage A.R."/>
            <person name="Dougherty B.A."/>
            <person name="Tomb J.-F."/>
            <person name="Adams M.D."/>
            <person name="Reich C.I."/>
            <person name="Overbeek R."/>
            <person name="Kirkness E.F."/>
            <person name="Weinstock K.G."/>
            <person name="Merrick J.M."/>
            <person name="Glodek A."/>
            <person name="Scott J.L."/>
            <person name="Geoghagen N.S.M."/>
            <person name="Weidman J.F."/>
            <person name="Fuhrmann J.L."/>
            <person name="Nguyen D."/>
            <person name="Utterback T.R."/>
            <person name="Kelley J.M."/>
            <person name="Peterson J.D."/>
            <person name="Sadow P.W."/>
            <person name="Hanna M.C."/>
            <person name="Cotton M.D."/>
            <person name="Roberts K.M."/>
            <person name="Hurst M.A."/>
            <person name="Kaine B.P."/>
            <person name="Borodovsky M."/>
            <person name="Klenk H.-P."/>
            <person name="Fraser C.M."/>
            <person name="Smith H.O."/>
            <person name="Woese C.R."/>
            <person name="Venter J.C."/>
        </authorList>
    </citation>
    <scope>NUCLEOTIDE SEQUENCE [LARGE SCALE GENOMIC DNA]</scope>
    <source>
        <strain>ATCC 43067 / DSM 2661 / JAL-1 / JCM 10045 / NBRC 100440</strain>
    </source>
</reference>
<protein>
    <recommendedName>
        <fullName evidence="1">Large ribosomal subunit protein uL14</fullName>
    </recommendedName>
    <alternativeName>
        <fullName evidence="2">50S ribosomal protein L14</fullName>
    </alternativeName>
</protein>
<feature type="chain" id="PRO_0000128573" description="Large ribosomal subunit protein uL14">
    <location>
        <begin position="1"/>
        <end position="132"/>
    </location>
</feature>
<name>RL14_METJA</name>
<comment type="function">
    <text evidence="1">Binds to 23S rRNA. Forms part of two intersubunit bridges in the 70S ribosome.</text>
</comment>
<comment type="subunit">
    <text evidence="1">Part of the 50S ribosomal subunit. Forms a cluster with proteins L3 and L24e, part of which may contact the 16S rRNA in 2 intersubunit bridges.</text>
</comment>
<comment type="similarity">
    <text evidence="1">Belongs to the universal ribosomal protein uL14 family.</text>
</comment>
<sequence>MKAIGSKPVRALPVGARCICADNTGAKEVEIIAVRNYKGVARRLPTARVGDMVIVTVKKGTPEMRKQVLPAVVIRQRKEIRRPDGTRVKFADNAVVIVTPDGNPKGSDIKGPVAKEAAERWPGIARIAKIII</sequence>